<sequence length="178" mass="19478">MSEVRLPPLRALDDFVLGSARLAAPDPGDPQRWCHRVINNLLYYQTNYLLCFGISLALAGYIRPLHTLLSALVVVVALGVLVWAAETRAAVRRCRRSHPAACLAAVLAISLFILWAVGGAFTFLLSITAPVFLILLHASLRLRNLKNKIENKIESIGLKRTPMGLLLEALGQEQEAGS</sequence>
<reference key="1">
    <citation type="journal article" date="2000" name="Genomics">
        <title>A transcript map of a 2-Mb BAC contig in the proximal portion of the mouse X chromosome and regional mapping of the scurfy mutation.</title>
        <authorList>
            <person name="Means G.D."/>
            <person name="Toy D.Y."/>
            <person name="Baum P.R."/>
            <person name="Derry J.M.J."/>
        </authorList>
    </citation>
    <scope>NUCLEOTIDE SEQUENCE [MRNA]</scope>
</reference>
<reference key="2">
    <citation type="journal article" date="2005" name="Science">
        <title>The transcriptional landscape of the mammalian genome.</title>
        <authorList>
            <person name="Carninci P."/>
            <person name="Kasukawa T."/>
            <person name="Katayama S."/>
            <person name="Gough J."/>
            <person name="Frith M.C."/>
            <person name="Maeda N."/>
            <person name="Oyama R."/>
            <person name="Ravasi T."/>
            <person name="Lenhard B."/>
            <person name="Wells C."/>
            <person name="Kodzius R."/>
            <person name="Shimokawa K."/>
            <person name="Bajic V.B."/>
            <person name="Brenner S.E."/>
            <person name="Batalov S."/>
            <person name="Forrest A.R."/>
            <person name="Zavolan M."/>
            <person name="Davis M.J."/>
            <person name="Wilming L.G."/>
            <person name="Aidinis V."/>
            <person name="Allen J.E."/>
            <person name="Ambesi-Impiombato A."/>
            <person name="Apweiler R."/>
            <person name="Aturaliya R.N."/>
            <person name="Bailey T.L."/>
            <person name="Bansal M."/>
            <person name="Baxter L."/>
            <person name="Beisel K.W."/>
            <person name="Bersano T."/>
            <person name="Bono H."/>
            <person name="Chalk A.M."/>
            <person name="Chiu K.P."/>
            <person name="Choudhary V."/>
            <person name="Christoffels A."/>
            <person name="Clutterbuck D.R."/>
            <person name="Crowe M.L."/>
            <person name="Dalla E."/>
            <person name="Dalrymple B.P."/>
            <person name="de Bono B."/>
            <person name="Della Gatta G."/>
            <person name="di Bernardo D."/>
            <person name="Down T."/>
            <person name="Engstrom P."/>
            <person name="Fagiolini M."/>
            <person name="Faulkner G."/>
            <person name="Fletcher C.F."/>
            <person name="Fukushima T."/>
            <person name="Furuno M."/>
            <person name="Futaki S."/>
            <person name="Gariboldi M."/>
            <person name="Georgii-Hemming P."/>
            <person name="Gingeras T.R."/>
            <person name="Gojobori T."/>
            <person name="Green R.E."/>
            <person name="Gustincich S."/>
            <person name="Harbers M."/>
            <person name="Hayashi Y."/>
            <person name="Hensch T.K."/>
            <person name="Hirokawa N."/>
            <person name="Hill D."/>
            <person name="Huminiecki L."/>
            <person name="Iacono M."/>
            <person name="Ikeo K."/>
            <person name="Iwama A."/>
            <person name="Ishikawa T."/>
            <person name="Jakt M."/>
            <person name="Kanapin A."/>
            <person name="Katoh M."/>
            <person name="Kawasawa Y."/>
            <person name="Kelso J."/>
            <person name="Kitamura H."/>
            <person name="Kitano H."/>
            <person name="Kollias G."/>
            <person name="Krishnan S.P."/>
            <person name="Kruger A."/>
            <person name="Kummerfeld S.K."/>
            <person name="Kurochkin I.V."/>
            <person name="Lareau L.F."/>
            <person name="Lazarevic D."/>
            <person name="Lipovich L."/>
            <person name="Liu J."/>
            <person name="Liuni S."/>
            <person name="McWilliam S."/>
            <person name="Madan Babu M."/>
            <person name="Madera M."/>
            <person name="Marchionni L."/>
            <person name="Matsuda H."/>
            <person name="Matsuzawa S."/>
            <person name="Miki H."/>
            <person name="Mignone F."/>
            <person name="Miyake S."/>
            <person name="Morris K."/>
            <person name="Mottagui-Tabar S."/>
            <person name="Mulder N."/>
            <person name="Nakano N."/>
            <person name="Nakauchi H."/>
            <person name="Ng P."/>
            <person name="Nilsson R."/>
            <person name="Nishiguchi S."/>
            <person name="Nishikawa S."/>
            <person name="Nori F."/>
            <person name="Ohara O."/>
            <person name="Okazaki Y."/>
            <person name="Orlando V."/>
            <person name="Pang K.C."/>
            <person name="Pavan W.J."/>
            <person name="Pavesi G."/>
            <person name="Pesole G."/>
            <person name="Petrovsky N."/>
            <person name="Piazza S."/>
            <person name="Reed J."/>
            <person name="Reid J.F."/>
            <person name="Ring B.Z."/>
            <person name="Ringwald M."/>
            <person name="Rost B."/>
            <person name="Ruan Y."/>
            <person name="Salzberg S.L."/>
            <person name="Sandelin A."/>
            <person name="Schneider C."/>
            <person name="Schoenbach C."/>
            <person name="Sekiguchi K."/>
            <person name="Semple C.A."/>
            <person name="Seno S."/>
            <person name="Sessa L."/>
            <person name="Sheng Y."/>
            <person name="Shibata Y."/>
            <person name="Shimada H."/>
            <person name="Shimada K."/>
            <person name="Silva D."/>
            <person name="Sinclair B."/>
            <person name="Sperling S."/>
            <person name="Stupka E."/>
            <person name="Sugiura K."/>
            <person name="Sultana R."/>
            <person name="Takenaka Y."/>
            <person name="Taki K."/>
            <person name="Tammoja K."/>
            <person name="Tan S.L."/>
            <person name="Tang S."/>
            <person name="Taylor M.S."/>
            <person name="Tegner J."/>
            <person name="Teichmann S.A."/>
            <person name="Ueda H.R."/>
            <person name="van Nimwegen E."/>
            <person name="Verardo R."/>
            <person name="Wei C.L."/>
            <person name="Yagi K."/>
            <person name="Yamanishi H."/>
            <person name="Zabarovsky E."/>
            <person name="Zhu S."/>
            <person name="Zimmer A."/>
            <person name="Hide W."/>
            <person name="Bult C."/>
            <person name="Grimmond S.M."/>
            <person name="Teasdale R.D."/>
            <person name="Liu E.T."/>
            <person name="Brusic V."/>
            <person name="Quackenbush J."/>
            <person name="Wahlestedt C."/>
            <person name="Mattick J.S."/>
            <person name="Hume D.A."/>
            <person name="Kai C."/>
            <person name="Sasaki D."/>
            <person name="Tomaru Y."/>
            <person name="Fukuda S."/>
            <person name="Kanamori-Katayama M."/>
            <person name="Suzuki M."/>
            <person name="Aoki J."/>
            <person name="Arakawa T."/>
            <person name="Iida J."/>
            <person name="Imamura K."/>
            <person name="Itoh M."/>
            <person name="Kato T."/>
            <person name="Kawaji H."/>
            <person name="Kawagashira N."/>
            <person name="Kawashima T."/>
            <person name="Kojima M."/>
            <person name="Kondo S."/>
            <person name="Konno H."/>
            <person name="Nakano K."/>
            <person name="Ninomiya N."/>
            <person name="Nishio T."/>
            <person name="Okada M."/>
            <person name="Plessy C."/>
            <person name="Shibata K."/>
            <person name="Shiraki T."/>
            <person name="Suzuki S."/>
            <person name="Tagami M."/>
            <person name="Waki K."/>
            <person name="Watahiki A."/>
            <person name="Okamura-Oho Y."/>
            <person name="Suzuki H."/>
            <person name="Kawai J."/>
            <person name="Hayashizaki Y."/>
        </authorList>
    </citation>
    <scope>NUCLEOTIDE SEQUENCE [LARGE SCALE MRNA]</scope>
    <source>
        <strain>C57BL/6J</strain>
    </source>
</reference>
<reference key="3">
    <citation type="journal article" date="2004" name="Genome Res.">
        <title>The status, quality, and expansion of the NIH full-length cDNA project: the Mammalian Gene Collection (MGC).</title>
        <authorList>
            <consortium name="The MGC Project Team"/>
        </authorList>
    </citation>
    <scope>NUCLEOTIDE SEQUENCE [LARGE SCALE MRNA]</scope>
    <source>
        <strain>C3H/He</strain>
        <tissue>Osteoblast</tissue>
    </source>
</reference>
<reference key="4">
    <citation type="journal article" date="2010" name="Cell">
        <title>A tissue-specific atlas of mouse protein phosphorylation and expression.</title>
        <authorList>
            <person name="Huttlin E.L."/>
            <person name="Jedrychowski M.P."/>
            <person name="Elias J.E."/>
            <person name="Goswami T."/>
            <person name="Rad R."/>
            <person name="Beausoleil S.A."/>
            <person name="Villen J."/>
            <person name="Haas W."/>
            <person name="Sowa M.E."/>
            <person name="Gygi S.P."/>
        </authorList>
    </citation>
    <scope>IDENTIFICATION BY MASS SPECTROMETRY [LARGE SCALE ANALYSIS]</scope>
    <source>
        <tissue>Kidney</tissue>
        <tissue>Lung</tissue>
        <tissue>Pancreas</tissue>
        <tissue>Spleen</tissue>
        <tissue>Testis</tissue>
    </source>
</reference>
<proteinExistence type="evidence at protein level"/>
<gene>
    <name type="primary">Praf2</name>
    <name type="synonym">DXImx39e</name>
</gene>
<accession>Q9JIG8</accession>
<organism>
    <name type="scientific">Mus musculus</name>
    <name type="common">Mouse</name>
    <dbReference type="NCBI Taxonomy" id="10090"/>
    <lineage>
        <taxon>Eukaryota</taxon>
        <taxon>Metazoa</taxon>
        <taxon>Chordata</taxon>
        <taxon>Craniata</taxon>
        <taxon>Vertebrata</taxon>
        <taxon>Euteleostomi</taxon>
        <taxon>Mammalia</taxon>
        <taxon>Eutheria</taxon>
        <taxon>Euarchontoglires</taxon>
        <taxon>Glires</taxon>
        <taxon>Rodentia</taxon>
        <taxon>Myomorpha</taxon>
        <taxon>Muroidea</taxon>
        <taxon>Muridae</taxon>
        <taxon>Murinae</taxon>
        <taxon>Mus</taxon>
        <taxon>Mus</taxon>
    </lineage>
</organism>
<feature type="chain" id="PRO_0000220882" description="PRA1 family protein 2">
    <location>
        <begin position="1"/>
        <end position="178"/>
    </location>
</feature>
<feature type="topological domain" description="Cytoplasmic" evidence="2">
    <location>
        <begin position="1"/>
        <end position="41"/>
    </location>
</feature>
<feature type="transmembrane region" description="Helical" evidence="2">
    <location>
        <begin position="42"/>
        <end position="62"/>
    </location>
</feature>
<feature type="topological domain" description="Extracellular" evidence="2">
    <location>
        <begin position="63"/>
        <end position="64"/>
    </location>
</feature>
<feature type="transmembrane region" description="Helical" evidence="2">
    <location>
        <begin position="65"/>
        <end position="85"/>
    </location>
</feature>
<feature type="topological domain" description="Cytoplasmic" evidence="2">
    <location>
        <begin position="86"/>
        <end position="96"/>
    </location>
</feature>
<feature type="transmembrane region" description="Helical" evidence="2">
    <location>
        <begin position="97"/>
        <end position="119"/>
    </location>
</feature>
<feature type="topological domain" description="Extracellular" evidence="2">
    <location>
        <begin position="120"/>
        <end position="122"/>
    </location>
</feature>
<feature type="transmembrane region" description="Helical" evidence="2">
    <location>
        <begin position="123"/>
        <end position="140"/>
    </location>
</feature>
<feature type="topological domain" description="Cytoplasmic" evidence="2">
    <location>
        <begin position="141"/>
        <end position="178"/>
    </location>
</feature>
<dbReference type="EMBL" id="AF229636">
    <property type="protein sequence ID" value="AAF66950.1"/>
    <property type="molecule type" value="mRNA"/>
</dbReference>
<dbReference type="EMBL" id="AK003344">
    <property type="protein sequence ID" value="BAB22729.1"/>
    <property type="molecule type" value="mRNA"/>
</dbReference>
<dbReference type="EMBL" id="BC064757">
    <property type="protein sequence ID" value="AAH64757.1"/>
    <property type="molecule type" value="mRNA"/>
</dbReference>
<dbReference type="CCDS" id="CCDS29971.1"/>
<dbReference type="RefSeq" id="NP_613068.1">
    <property type="nucleotide sequence ID" value="NM_138602.4"/>
</dbReference>
<dbReference type="BioGRID" id="207700">
    <property type="interactions" value="10"/>
</dbReference>
<dbReference type="FunCoup" id="Q9JIG8">
    <property type="interactions" value="429"/>
</dbReference>
<dbReference type="IntAct" id="Q9JIG8">
    <property type="interactions" value="1"/>
</dbReference>
<dbReference type="STRING" id="10090.ENSMUSP00000033489"/>
<dbReference type="GlyGen" id="Q9JIG8">
    <property type="glycosylation" value="1 site, 1 O-linked glycan (1 site)"/>
</dbReference>
<dbReference type="iPTMnet" id="Q9JIG8"/>
<dbReference type="PhosphoSitePlus" id="Q9JIG8"/>
<dbReference type="SwissPalm" id="Q9JIG8"/>
<dbReference type="PaxDb" id="10090-ENSMUSP00000033489"/>
<dbReference type="PeptideAtlas" id="Q9JIG8"/>
<dbReference type="ProteomicsDB" id="289394"/>
<dbReference type="Pumba" id="Q9JIG8"/>
<dbReference type="Antibodypedia" id="34944">
    <property type="antibodies" value="146 antibodies from 29 providers"/>
</dbReference>
<dbReference type="DNASU" id="54637"/>
<dbReference type="Ensembl" id="ENSMUST00000033489.8">
    <property type="protein sequence ID" value="ENSMUSP00000033489.8"/>
    <property type="gene ID" value="ENSMUSG00000031149.8"/>
</dbReference>
<dbReference type="GeneID" id="54637"/>
<dbReference type="KEGG" id="mmu:54637"/>
<dbReference type="UCSC" id="uc009sme.1">
    <property type="organism name" value="mouse"/>
</dbReference>
<dbReference type="AGR" id="MGI:1859607"/>
<dbReference type="CTD" id="11230"/>
<dbReference type="MGI" id="MGI:1859607">
    <property type="gene designation" value="Praf2"/>
</dbReference>
<dbReference type="VEuPathDB" id="HostDB:ENSMUSG00000031149"/>
<dbReference type="eggNOG" id="KOG4050">
    <property type="taxonomic scope" value="Eukaryota"/>
</dbReference>
<dbReference type="GeneTree" id="ENSGT00390000008631"/>
<dbReference type="HOGENOM" id="CLU_097683_0_0_1"/>
<dbReference type="InParanoid" id="Q9JIG8"/>
<dbReference type="OMA" id="GDPQRWC"/>
<dbReference type="OrthoDB" id="18213at2759"/>
<dbReference type="PhylomeDB" id="Q9JIG8"/>
<dbReference type="TreeFam" id="TF105479"/>
<dbReference type="BioGRID-ORCS" id="54637">
    <property type="hits" value="2 hits in 76 CRISPR screens"/>
</dbReference>
<dbReference type="CD-CODE" id="CE726F99">
    <property type="entry name" value="Postsynaptic density"/>
</dbReference>
<dbReference type="ChiTaRS" id="Praf2">
    <property type="organism name" value="mouse"/>
</dbReference>
<dbReference type="PRO" id="PR:Q9JIG8"/>
<dbReference type="Proteomes" id="UP000000589">
    <property type="component" value="Chromosome X"/>
</dbReference>
<dbReference type="RNAct" id="Q9JIG8">
    <property type="molecule type" value="protein"/>
</dbReference>
<dbReference type="Bgee" id="ENSMUSG00000031149">
    <property type="expression patterns" value="Expressed in striatum and 67 other cell types or tissues"/>
</dbReference>
<dbReference type="GO" id="GO:0010008">
    <property type="term" value="C:endosome membrane"/>
    <property type="evidence" value="ECO:0007669"/>
    <property type="project" value="UniProtKB-SubCell"/>
</dbReference>
<dbReference type="GO" id="GO:0098982">
    <property type="term" value="C:GABA-ergic synapse"/>
    <property type="evidence" value="ECO:0000314"/>
    <property type="project" value="SynGO"/>
</dbReference>
<dbReference type="GO" id="GO:0098978">
    <property type="term" value="C:glutamatergic synapse"/>
    <property type="evidence" value="ECO:0000314"/>
    <property type="project" value="SynGO"/>
</dbReference>
<dbReference type="GO" id="GO:0098794">
    <property type="term" value="C:postsynapse"/>
    <property type="evidence" value="ECO:0000314"/>
    <property type="project" value="SynGO"/>
</dbReference>
<dbReference type="GO" id="GO:0098793">
    <property type="term" value="C:presynapse"/>
    <property type="evidence" value="ECO:0000314"/>
    <property type="project" value="SynGO"/>
</dbReference>
<dbReference type="GO" id="GO:0015031">
    <property type="term" value="P:protein transport"/>
    <property type="evidence" value="ECO:0007669"/>
    <property type="project" value="UniProtKB-KW"/>
</dbReference>
<dbReference type="InterPro" id="IPR004895">
    <property type="entry name" value="Prenylated_rab_accept_PRA1"/>
</dbReference>
<dbReference type="PANTHER" id="PTHR12859:SF1">
    <property type="entry name" value="PRA1 FAMILY PROTEIN 2"/>
    <property type="match status" value="1"/>
</dbReference>
<dbReference type="PANTHER" id="PTHR12859">
    <property type="entry name" value="PRA1 PROTEIN"/>
    <property type="match status" value="1"/>
</dbReference>
<dbReference type="Pfam" id="PF03208">
    <property type="entry name" value="PRA1"/>
    <property type="match status" value="1"/>
</dbReference>
<protein>
    <recommendedName>
        <fullName>PRA1 family protein 2</fullName>
    </recommendedName>
</protein>
<keyword id="KW-0967">Endosome</keyword>
<keyword id="KW-0472">Membrane</keyword>
<keyword id="KW-0653">Protein transport</keyword>
<keyword id="KW-1185">Reference proteome</keyword>
<keyword id="KW-0812">Transmembrane</keyword>
<keyword id="KW-1133">Transmembrane helix</keyword>
<keyword id="KW-0813">Transport</keyword>
<name>PRAF2_MOUSE</name>
<comment type="function">
    <text evidence="1">May be involved in ER/Golgi transport and vesicular traffic. Plays a proapoptotic role in cerulenin-induced neuroblastoma apoptosis (By similarity).</text>
</comment>
<comment type="subunit">
    <text evidence="1">Interacts with CCR5 and GDE1.</text>
</comment>
<comment type="subcellular location">
    <subcellularLocation>
        <location evidence="1">Endosome membrane</location>
        <topology evidence="1">Multi-pass membrane protein</topology>
    </subcellularLocation>
</comment>
<comment type="similarity">
    <text evidence="3">Belongs to the PRA1 family.</text>
</comment>
<evidence type="ECO:0000250" key="1"/>
<evidence type="ECO:0000255" key="2"/>
<evidence type="ECO:0000305" key="3"/>